<gene>
    <name evidence="1" type="primary">mdh</name>
    <name type="ordered locus">Daud_1121</name>
</gene>
<keyword id="KW-0520">NAD</keyword>
<keyword id="KW-0560">Oxidoreductase</keyword>
<keyword id="KW-1185">Reference proteome</keyword>
<keyword id="KW-0816">Tricarboxylic acid cycle</keyword>
<reference key="1">
    <citation type="submission" date="2007-10" db="EMBL/GenBank/DDBJ databases">
        <title>Complete sequence of chromosome of Desulforudis audaxviator MP104C.</title>
        <authorList>
            <person name="Copeland A."/>
            <person name="Lucas S."/>
            <person name="Lapidus A."/>
            <person name="Barry K."/>
            <person name="Glavina del Rio T."/>
            <person name="Dalin E."/>
            <person name="Tice H."/>
            <person name="Bruce D."/>
            <person name="Pitluck S."/>
            <person name="Lowry S.R."/>
            <person name="Larimer F."/>
            <person name="Land M.L."/>
            <person name="Hauser L."/>
            <person name="Kyrpides N."/>
            <person name="Ivanova N.N."/>
            <person name="Richardson P."/>
        </authorList>
    </citation>
    <scope>NUCLEOTIDE SEQUENCE [LARGE SCALE GENOMIC DNA]</scope>
    <source>
        <strain>MP104C</strain>
    </source>
</reference>
<sequence>MRRKKISIVGAGNVGATCAHWIAAKELGDIVLLDVAEGVPQGKALDLMEAAPVEGFDCMITGTNDYRDTAGSDVAVITAGVARKPGMSRDDLVSINVKIVRQAAAEIARYSPDALIIVVTNPLDVMCYVAYKASGLPRGKVFGMSGILDGARFRTFVALELGISFEDVTTLVLGGHGDHMVPLVRYTYAGAIPVEKLIPADRLAELVQRTRQGGAEIVELLKTGSAYYAPGAAITQMLEAVLKDKKRILPCAAYLDGEYGHRDICAGVPTIVGAGGIERIIELELTAEEQAAFDRSVSAVRGVLKGLDI</sequence>
<dbReference type="EC" id="1.1.1.37" evidence="1"/>
<dbReference type="EMBL" id="CP000860">
    <property type="protein sequence ID" value="ACA59632.1"/>
    <property type="molecule type" value="Genomic_DNA"/>
</dbReference>
<dbReference type="RefSeq" id="WP_012302218.1">
    <property type="nucleotide sequence ID" value="NC_010424.1"/>
</dbReference>
<dbReference type="SMR" id="B1I3T1"/>
<dbReference type="STRING" id="477974.Daud_1121"/>
<dbReference type="KEGG" id="dau:Daud_1121"/>
<dbReference type="eggNOG" id="COG0039">
    <property type="taxonomic scope" value="Bacteria"/>
</dbReference>
<dbReference type="HOGENOM" id="CLU_045401_2_1_9"/>
<dbReference type="OrthoDB" id="9802969at2"/>
<dbReference type="Proteomes" id="UP000008544">
    <property type="component" value="Chromosome"/>
</dbReference>
<dbReference type="GO" id="GO:0004459">
    <property type="term" value="F:L-lactate dehydrogenase activity"/>
    <property type="evidence" value="ECO:0007669"/>
    <property type="project" value="TreeGrafter"/>
</dbReference>
<dbReference type="GO" id="GO:0030060">
    <property type="term" value="F:L-malate dehydrogenase (NAD+) activity"/>
    <property type="evidence" value="ECO:0007669"/>
    <property type="project" value="UniProtKB-UniRule"/>
</dbReference>
<dbReference type="GO" id="GO:0006089">
    <property type="term" value="P:lactate metabolic process"/>
    <property type="evidence" value="ECO:0007669"/>
    <property type="project" value="TreeGrafter"/>
</dbReference>
<dbReference type="GO" id="GO:0006099">
    <property type="term" value="P:tricarboxylic acid cycle"/>
    <property type="evidence" value="ECO:0007669"/>
    <property type="project" value="UniProtKB-UniRule"/>
</dbReference>
<dbReference type="CDD" id="cd01339">
    <property type="entry name" value="LDH-like_MDH"/>
    <property type="match status" value="1"/>
</dbReference>
<dbReference type="FunFam" id="3.40.50.720:FF:000018">
    <property type="entry name" value="Malate dehydrogenase"/>
    <property type="match status" value="1"/>
</dbReference>
<dbReference type="FunFam" id="3.90.110.10:FF:000004">
    <property type="entry name" value="Malate dehydrogenase"/>
    <property type="match status" value="1"/>
</dbReference>
<dbReference type="Gene3D" id="3.90.110.10">
    <property type="entry name" value="Lactate dehydrogenase/glycoside hydrolase, family 4, C-terminal"/>
    <property type="match status" value="1"/>
</dbReference>
<dbReference type="Gene3D" id="3.40.50.720">
    <property type="entry name" value="NAD(P)-binding Rossmann-like Domain"/>
    <property type="match status" value="1"/>
</dbReference>
<dbReference type="HAMAP" id="MF_00487">
    <property type="entry name" value="Malate_dehydrog_3"/>
    <property type="match status" value="1"/>
</dbReference>
<dbReference type="InterPro" id="IPR001557">
    <property type="entry name" value="L-lactate/malate_DH"/>
</dbReference>
<dbReference type="InterPro" id="IPR022383">
    <property type="entry name" value="Lactate/malate_DH_C"/>
</dbReference>
<dbReference type="InterPro" id="IPR001236">
    <property type="entry name" value="Lactate/malate_DH_N"/>
</dbReference>
<dbReference type="InterPro" id="IPR015955">
    <property type="entry name" value="Lactate_DH/Glyco_Ohase_4_C"/>
</dbReference>
<dbReference type="InterPro" id="IPR011275">
    <property type="entry name" value="Malate_DH_type3"/>
</dbReference>
<dbReference type="InterPro" id="IPR036291">
    <property type="entry name" value="NAD(P)-bd_dom_sf"/>
</dbReference>
<dbReference type="NCBIfam" id="TIGR01763">
    <property type="entry name" value="MalateDH_bact"/>
    <property type="match status" value="1"/>
</dbReference>
<dbReference type="NCBIfam" id="NF004863">
    <property type="entry name" value="PRK06223.1"/>
    <property type="match status" value="1"/>
</dbReference>
<dbReference type="PANTHER" id="PTHR43128">
    <property type="entry name" value="L-2-HYDROXYCARBOXYLATE DEHYDROGENASE (NAD(P)(+))"/>
    <property type="match status" value="1"/>
</dbReference>
<dbReference type="PANTHER" id="PTHR43128:SF16">
    <property type="entry name" value="L-LACTATE DEHYDROGENASE"/>
    <property type="match status" value="1"/>
</dbReference>
<dbReference type="Pfam" id="PF02866">
    <property type="entry name" value="Ldh_1_C"/>
    <property type="match status" value="1"/>
</dbReference>
<dbReference type="Pfam" id="PF00056">
    <property type="entry name" value="Ldh_1_N"/>
    <property type="match status" value="1"/>
</dbReference>
<dbReference type="PIRSF" id="PIRSF000102">
    <property type="entry name" value="Lac_mal_DH"/>
    <property type="match status" value="1"/>
</dbReference>
<dbReference type="PRINTS" id="PR00086">
    <property type="entry name" value="LLDHDRGNASE"/>
</dbReference>
<dbReference type="SUPFAM" id="SSF56327">
    <property type="entry name" value="LDH C-terminal domain-like"/>
    <property type="match status" value="1"/>
</dbReference>
<dbReference type="SUPFAM" id="SSF51735">
    <property type="entry name" value="NAD(P)-binding Rossmann-fold domains"/>
    <property type="match status" value="1"/>
</dbReference>
<proteinExistence type="inferred from homology"/>
<accession>B1I3T1</accession>
<comment type="function">
    <text evidence="1">Catalyzes the reversible oxidation of malate to oxaloacetate.</text>
</comment>
<comment type="catalytic activity">
    <reaction evidence="1">
        <text>(S)-malate + NAD(+) = oxaloacetate + NADH + H(+)</text>
        <dbReference type="Rhea" id="RHEA:21432"/>
        <dbReference type="ChEBI" id="CHEBI:15378"/>
        <dbReference type="ChEBI" id="CHEBI:15589"/>
        <dbReference type="ChEBI" id="CHEBI:16452"/>
        <dbReference type="ChEBI" id="CHEBI:57540"/>
        <dbReference type="ChEBI" id="CHEBI:57945"/>
        <dbReference type="EC" id="1.1.1.37"/>
    </reaction>
</comment>
<comment type="similarity">
    <text evidence="1">Belongs to the LDH/MDH superfamily. MDH type 3 family.</text>
</comment>
<organism>
    <name type="scientific">Desulforudis audaxviator (strain MP104C)</name>
    <dbReference type="NCBI Taxonomy" id="477974"/>
    <lineage>
        <taxon>Bacteria</taxon>
        <taxon>Bacillati</taxon>
        <taxon>Bacillota</taxon>
        <taxon>Clostridia</taxon>
        <taxon>Thermoanaerobacterales</taxon>
        <taxon>Candidatus Desulforudaceae</taxon>
        <taxon>Candidatus Desulforudis</taxon>
    </lineage>
</organism>
<protein>
    <recommendedName>
        <fullName evidence="1">Malate dehydrogenase</fullName>
        <ecNumber evidence="1">1.1.1.37</ecNumber>
    </recommendedName>
</protein>
<name>MDH_DESAP</name>
<evidence type="ECO:0000255" key="1">
    <source>
        <dbReference type="HAMAP-Rule" id="MF_00487"/>
    </source>
</evidence>
<feature type="chain" id="PRO_1000126131" description="Malate dehydrogenase">
    <location>
        <begin position="1"/>
        <end position="309"/>
    </location>
</feature>
<feature type="active site" description="Proton acceptor" evidence="1">
    <location>
        <position position="176"/>
    </location>
</feature>
<feature type="binding site" evidence="1">
    <location>
        <begin position="10"/>
        <end position="15"/>
    </location>
    <ligand>
        <name>NAD(+)</name>
        <dbReference type="ChEBI" id="CHEBI:57540"/>
    </ligand>
</feature>
<feature type="binding site" evidence="1">
    <location>
        <position position="34"/>
    </location>
    <ligand>
        <name>NAD(+)</name>
        <dbReference type="ChEBI" id="CHEBI:57540"/>
    </ligand>
</feature>
<feature type="binding site" evidence="1">
    <location>
        <position position="83"/>
    </location>
    <ligand>
        <name>substrate</name>
    </ligand>
</feature>
<feature type="binding site" evidence="1">
    <location>
        <position position="89"/>
    </location>
    <ligand>
        <name>substrate</name>
    </ligand>
</feature>
<feature type="binding site" evidence="1">
    <location>
        <position position="96"/>
    </location>
    <ligand>
        <name>NAD(+)</name>
        <dbReference type="ChEBI" id="CHEBI:57540"/>
    </ligand>
</feature>
<feature type="binding site" evidence="1">
    <location>
        <begin position="119"/>
        <end position="121"/>
    </location>
    <ligand>
        <name>NAD(+)</name>
        <dbReference type="ChEBI" id="CHEBI:57540"/>
    </ligand>
</feature>
<feature type="binding site" evidence="1">
    <location>
        <position position="121"/>
    </location>
    <ligand>
        <name>substrate</name>
    </ligand>
</feature>
<feature type="binding site" evidence="1">
    <location>
        <position position="152"/>
    </location>
    <ligand>
        <name>substrate</name>
    </ligand>
</feature>